<proteinExistence type="inferred from homology"/>
<name>GATA_HALMA</name>
<accession>Q5V2G6</accession>
<dbReference type="EC" id="6.3.5.7" evidence="1"/>
<dbReference type="EMBL" id="AY596297">
    <property type="protein sequence ID" value="AAV46286.1"/>
    <property type="molecule type" value="Genomic_DNA"/>
</dbReference>
<dbReference type="RefSeq" id="WP_011223577.1">
    <property type="nucleotide sequence ID" value="NC_006396.1"/>
</dbReference>
<dbReference type="SMR" id="Q5V2G6"/>
<dbReference type="STRING" id="272569.rrnAC1355"/>
<dbReference type="PaxDb" id="272569-rrnAC1355"/>
<dbReference type="EnsemblBacteria" id="AAV46286">
    <property type="protein sequence ID" value="AAV46286"/>
    <property type="gene ID" value="rrnAC1355"/>
</dbReference>
<dbReference type="GeneID" id="40152326"/>
<dbReference type="KEGG" id="hma:rrnAC1355"/>
<dbReference type="PATRIC" id="fig|272569.17.peg.2053"/>
<dbReference type="eggNOG" id="arCOG01717">
    <property type="taxonomic scope" value="Archaea"/>
</dbReference>
<dbReference type="HOGENOM" id="CLU_009600_0_3_2"/>
<dbReference type="Proteomes" id="UP000001169">
    <property type="component" value="Chromosome I"/>
</dbReference>
<dbReference type="GO" id="GO:0030956">
    <property type="term" value="C:glutamyl-tRNA(Gln) amidotransferase complex"/>
    <property type="evidence" value="ECO:0007669"/>
    <property type="project" value="InterPro"/>
</dbReference>
<dbReference type="GO" id="GO:0005524">
    <property type="term" value="F:ATP binding"/>
    <property type="evidence" value="ECO:0007669"/>
    <property type="project" value="UniProtKB-KW"/>
</dbReference>
<dbReference type="GO" id="GO:0050567">
    <property type="term" value="F:glutaminyl-tRNA synthase (glutamine-hydrolyzing) activity"/>
    <property type="evidence" value="ECO:0007669"/>
    <property type="project" value="UniProtKB-UniRule"/>
</dbReference>
<dbReference type="GO" id="GO:0006412">
    <property type="term" value="P:translation"/>
    <property type="evidence" value="ECO:0007669"/>
    <property type="project" value="UniProtKB-UniRule"/>
</dbReference>
<dbReference type="Gene3D" id="3.90.1300.10">
    <property type="entry name" value="Amidase signature (AS) domain"/>
    <property type="match status" value="1"/>
</dbReference>
<dbReference type="HAMAP" id="MF_00120">
    <property type="entry name" value="GatA"/>
    <property type="match status" value="1"/>
</dbReference>
<dbReference type="InterPro" id="IPR000120">
    <property type="entry name" value="Amidase"/>
</dbReference>
<dbReference type="InterPro" id="IPR020556">
    <property type="entry name" value="Amidase_CS"/>
</dbReference>
<dbReference type="InterPro" id="IPR023631">
    <property type="entry name" value="Amidase_dom"/>
</dbReference>
<dbReference type="InterPro" id="IPR036928">
    <property type="entry name" value="AS_sf"/>
</dbReference>
<dbReference type="InterPro" id="IPR004412">
    <property type="entry name" value="GatA"/>
</dbReference>
<dbReference type="NCBIfam" id="TIGR00132">
    <property type="entry name" value="gatA"/>
    <property type="match status" value="1"/>
</dbReference>
<dbReference type="PANTHER" id="PTHR11895:SF7">
    <property type="entry name" value="GLUTAMYL-TRNA(GLN) AMIDOTRANSFERASE SUBUNIT A, MITOCHONDRIAL"/>
    <property type="match status" value="1"/>
</dbReference>
<dbReference type="PANTHER" id="PTHR11895">
    <property type="entry name" value="TRANSAMIDASE"/>
    <property type="match status" value="1"/>
</dbReference>
<dbReference type="Pfam" id="PF01425">
    <property type="entry name" value="Amidase"/>
    <property type="match status" value="1"/>
</dbReference>
<dbReference type="SUPFAM" id="SSF75304">
    <property type="entry name" value="Amidase signature (AS) enzymes"/>
    <property type="match status" value="1"/>
</dbReference>
<dbReference type="PROSITE" id="PS00571">
    <property type="entry name" value="AMIDASES"/>
    <property type="match status" value="1"/>
</dbReference>
<gene>
    <name evidence="1" type="primary">gatA</name>
    <name type="ordered locus">rrnAC1355</name>
</gene>
<sequence>MTEYNGYVTDETIEGADDGPLAGKTVAVKDNISTEGVRTTCGSAMLEDYVPPYDATVVERLKDAGATIPGKTNMDEFGMGTTTETSAFGAVENPAAEGRVPGGSSGGSAAVVAAGDADLALGSDTGGSIRCPAAFCGVVGIKPTYGLVSRYGLIAYANSLEQIGPIAPSVEGAAELLDVIAGPDEHDATTQEAPEADGSYAAAADGDVDGLSIGVPTELLDGADEAVVETFWDAMDDLEAQGASYHEVDLPSVEHAVEAYYVIAMSEASSNLARFDGVRYGQSGGYDGNWNESFANAREQGFGEEVKRRILLGTYALSAGYHDKYYKKAQDARAWVKQDFDEALDDADVLASPTMPVPPMKRGESLDDPLTMYLADANTTPVNLANLPAISVPAGETDDGLPVGLQLVGPAFGERQIIRAGSALA</sequence>
<evidence type="ECO:0000255" key="1">
    <source>
        <dbReference type="HAMAP-Rule" id="MF_00120"/>
    </source>
</evidence>
<reference key="1">
    <citation type="journal article" date="2004" name="Genome Res.">
        <title>Genome sequence of Haloarcula marismortui: a halophilic archaeon from the Dead Sea.</title>
        <authorList>
            <person name="Baliga N.S."/>
            <person name="Bonneau R."/>
            <person name="Facciotti M.T."/>
            <person name="Pan M."/>
            <person name="Glusman G."/>
            <person name="Deutsch E.W."/>
            <person name="Shannon P."/>
            <person name="Chiu Y."/>
            <person name="Weng R.S."/>
            <person name="Gan R.R."/>
            <person name="Hung P."/>
            <person name="Date S.V."/>
            <person name="Marcotte E."/>
            <person name="Hood L."/>
            <person name="Ng W.V."/>
        </authorList>
    </citation>
    <scope>NUCLEOTIDE SEQUENCE [LARGE SCALE GENOMIC DNA]</scope>
    <source>
        <strain>ATCC 43049 / DSM 3752 / JCM 8966 / VKM B-1809</strain>
    </source>
</reference>
<feature type="chain" id="PRO_0000105230" description="Glutamyl-tRNA(Gln) amidotransferase subunit A">
    <location>
        <begin position="1"/>
        <end position="425"/>
    </location>
</feature>
<feature type="active site" description="Charge relay system" evidence="1">
    <location>
        <position position="29"/>
    </location>
</feature>
<feature type="active site" description="Charge relay system" evidence="1">
    <location>
        <position position="104"/>
    </location>
</feature>
<feature type="active site" description="Acyl-ester intermediate" evidence="1">
    <location>
        <position position="128"/>
    </location>
</feature>
<keyword id="KW-0067">ATP-binding</keyword>
<keyword id="KW-0436">Ligase</keyword>
<keyword id="KW-0547">Nucleotide-binding</keyword>
<keyword id="KW-0648">Protein biosynthesis</keyword>
<keyword id="KW-1185">Reference proteome</keyword>
<comment type="function">
    <text evidence="1">Allows the formation of correctly charged Gln-tRNA(Gln) through the transamidation of misacylated Glu-tRNA(Gln) in organisms which lack glutaminyl-tRNA synthetase. The reaction takes place in the presence of glutamine and ATP through an activated gamma-phospho-Glu-tRNA(Gln).</text>
</comment>
<comment type="catalytic activity">
    <reaction evidence="1">
        <text>L-glutamyl-tRNA(Gln) + L-glutamine + ATP + H2O = L-glutaminyl-tRNA(Gln) + L-glutamate + ADP + phosphate + H(+)</text>
        <dbReference type="Rhea" id="RHEA:17521"/>
        <dbReference type="Rhea" id="RHEA-COMP:9681"/>
        <dbReference type="Rhea" id="RHEA-COMP:9684"/>
        <dbReference type="ChEBI" id="CHEBI:15377"/>
        <dbReference type="ChEBI" id="CHEBI:15378"/>
        <dbReference type="ChEBI" id="CHEBI:29985"/>
        <dbReference type="ChEBI" id="CHEBI:30616"/>
        <dbReference type="ChEBI" id="CHEBI:43474"/>
        <dbReference type="ChEBI" id="CHEBI:58359"/>
        <dbReference type="ChEBI" id="CHEBI:78520"/>
        <dbReference type="ChEBI" id="CHEBI:78521"/>
        <dbReference type="ChEBI" id="CHEBI:456216"/>
        <dbReference type="EC" id="6.3.5.7"/>
    </reaction>
</comment>
<comment type="subunit">
    <text evidence="1">Heterotrimer of A, B and C subunits.</text>
</comment>
<comment type="similarity">
    <text evidence="1">Belongs to the amidase family. GatA subfamily.</text>
</comment>
<organism>
    <name type="scientific">Haloarcula marismortui (strain ATCC 43049 / DSM 3752 / JCM 8966 / VKM B-1809)</name>
    <name type="common">Halobacterium marismortui</name>
    <dbReference type="NCBI Taxonomy" id="272569"/>
    <lineage>
        <taxon>Archaea</taxon>
        <taxon>Methanobacteriati</taxon>
        <taxon>Methanobacteriota</taxon>
        <taxon>Stenosarchaea group</taxon>
        <taxon>Halobacteria</taxon>
        <taxon>Halobacteriales</taxon>
        <taxon>Haloarculaceae</taxon>
        <taxon>Haloarcula</taxon>
    </lineage>
</organism>
<protein>
    <recommendedName>
        <fullName evidence="1">Glutamyl-tRNA(Gln) amidotransferase subunit A</fullName>
        <shortName evidence="1">Glu-ADT subunit A</shortName>
        <ecNumber evidence="1">6.3.5.7</ecNumber>
    </recommendedName>
</protein>